<comment type="domain">
    <text>The protein kinase domain is predicted to be catalytically inactive.</text>
</comment>
<comment type="similarity">
    <text evidence="2">Belongs to the protein kinase superfamily. CMGC Ser/Thr protein kinase family. MAP kinase subfamily.</text>
</comment>
<sequence length="392" mass="46078">MEIKDIIINSNLMLPPPTILTINNKDDYTSFTFKGKSISVPRKQRITKKTIYACDINGTMFQTYNMDTNRLLIIKKISLLQFKNHLQGRMMLRNCHYQRFFNHHPFVSGFKVSKRKSLNIKTKNLIESPVDDGTDLYFEFDQSDFTLYQMIRSDKAASRKQCPYVLYQLLTTIKYINSAGVIHRSLDPKTIAVNKEYKTKLFDFSFSISTDYPTDIFFKDYEETPWPYRSPETIIMLKEFSFECDVWSIGVIFAELILGEQLFRGESKQSLLIEISELIGTPTYDECKESTNGFARNFILNIPLKSRHGGIKKRIPNATEEEIEILEGMLCWNPKKRWPIERIIQHPYFQNYCHIEQYKCDKKFSLGSPYVFHRLNAKEIKKIIEDEFVTQP</sequence>
<accession>Q54US6</accession>
<feature type="chain" id="PRO_0000358906" description="Probable inactive serine/threonine-protein kinase DDB_G0280855">
    <location>
        <begin position="1"/>
        <end position="392"/>
    </location>
</feature>
<feature type="domain" description="Protein kinase" evidence="1">
    <location>
        <begin position="46"/>
        <end position="349"/>
    </location>
</feature>
<feature type="binding site" evidence="1">
    <location>
        <begin position="52"/>
        <end position="60"/>
    </location>
    <ligand>
        <name>ATP</name>
        <dbReference type="ChEBI" id="CHEBI:30616"/>
    </ligand>
</feature>
<feature type="binding site" evidence="1">
    <location>
        <position position="75"/>
    </location>
    <ligand>
        <name>ATP</name>
        <dbReference type="ChEBI" id="CHEBI:30616"/>
    </ligand>
</feature>
<proteinExistence type="inferred from homology"/>
<dbReference type="EMBL" id="AAFI02000039">
    <property type="protein sequence ID" value="EAL66969.1"/>
    <property type="molecule type" value="Genomic_DNA"/>
</dbReference>
<dbReference type="RefSeq" id="XP_640945.1">
    <property type="nucleotide sequence ID" value="XM_635853.1"/>
</dbReference>
<dbReference type="SMR" id="Q54US6"/>
<dbReference type="STRING" id="44689.Q54US6"/>
<dbReference type="PaxDb" id="44689-DDB0229333"/>
<dbReference type="EnsemblProtists" id="EAL66969">
    <property type="protein sequence ID" value="EAL66969"/>
    <property type="gene ID" value="DDB_G0280855"/>
</dbReference>
<dbReference type="GeneID" id="8622749"/>
<dbReference type="KEGG" id="ddi:DDB_G0280855"/>
<dbReference type="dictyBase" id="DDB_G0280855"/>
<dbReference type="VEuPathDB" id="AmoebaDB:DDB_G0280855"/>
<dbReference type="eggNOG" id="KOG0660">
    <property type="taxonomic scope" value="Eukaryota"/>
</dbReference>
<dbReference type="HOGENOM" id="CLU_620278_0_0_1"/>
<dbReference type="InParanoid" id="Q54US6"/>
<dbReference type="PhylomeDB" id="Q54US6"/>
<dbReference type="Reactome" id="R-DDI-168638">
    <property type="pathway name" value="NOD1/2 Signaling Pathway"/>
</dbReference>
<dbReference type="Reactome" id="R-DDI-193648">
    <property type="pathway name" value="NRAGE signals death through JNK"/>
</dbReference>
<dbReference type="Reactome" id="R-DDI-198753">
    <property type="pathway name" value="ERK/MAPK targets"/>
</dbReference>
<dbReference type="Reactome" id="R-DDI-2559580">
    <property type="pathway name" value="Oxidative Stress Induced Senescence"/>
</dbReference>
<dbReference type="Reactome" id="R-DDI-2871796">
    <property type="pathway name" value="FCERI mediated MAPK activation"/>
</dbReference>
<dbReference type="Reactome" id="R-DDI-418592">
    <property type="pathway name" value="ADP signalling through P2Y purinoceptor 1"/>
</dbReference>
<dbReference type="Reactome" id="R-DDI-450321">
    <property type="pathway name" value="JNK (c-Jun kinases) phosphorylation and activation mediated by activated human TAK1"/>
</dbReference>
<dbReference type="Reactome" id="R-DDI-525793">
    <property type="pathway name" value="Myogenesis"/>
</dbReference>
<dbReference type="Reactome" id="R-DDI-6798695">
    <property type="pathway name" value="Neutrophil degranulation"/>
</dbReference>
<dbReference type="Reactome" id="R-DDI-9007892">
    <property type="pathway name" value="Interleukin-38 signaling"/>
</dbReference>
<dbReference type="PRO" id="PR:Q54US6"/>
<dbReference type="Proteomes" id="UP000002195">
    <property type="component" value="Chromosome 3"/>
</dbReference>
<dbReference type="GO" id="GO:0005737">
    <property type="term" value="C:cytoplasm"/>
    <property type="evidence" value="ECO:0000318"/>
    <property type="project" value="GO_Central"/>
</dbReference>
<dbReference type="GO" id="GO:0005634">
    <property type="term" value="C:nucleus"/>
    <property type="evidence" value="ECO:0000318"/>
    <property type="project" value="GO_Central"/>
</dbReference>
<dbReference type="GO" id="GO:0005524">
    <property type="term" value="F:ATP binding"/>
    <property type="evidence" value="ECO:0007669"/>
    <property type="project" value="UniProtKB-KW"/>
</dbReference>
<dbReference type="GO" id="GO:0004674">
    <property type="term" value="F:protein serine/threonine kinase activity"/>
    <property type="evidence" value="ECO:0000318"/>
    <property type="project" value="GO_Central"/>
</dbReference>
<dbReference type="GO" id="GO:0035556">
    <property type="term" value="P:intracellular signal transduction"/>
    <property type="evidence" value="ECO:0000318"/>
    <property type="project" value="GO_Central"/>
</dbReference>
<dbReference type="FunFam" id="1.10.510.10:FF:002189">
    <property type="entry name" value="Probable inactive serine/threonine-protein kinase DDB_G0280855"/>
    <property type="match status" value="1"/>
</dbReference>
<dbReference type="Gene3D" id="3.30.200.20">
    <property type="entry name" value="Phosphorylase Kinase, domain 1"/>
    <property type="match status" value="1"/>
</dbReference>
<dbReference type="Gene3D" id="1.10.510.10">
    <property type="entry name" value="Transferase(Phosphotransferase) domain 1"/>
    <property type="match status" value="1"/>
</dbReference>
<dbReference type="InterPro" id="IPR011009">
    <property type="entry name" value="Kinase-like_dom_sf"/>
</dbReference>
<dbReference type="InterPro" id="IPR050117">
    <property type="entry name" value="MAP_kinase"/>
</dbReference>
<dbReference type="InterPro" id="IPR000719">
    <property type="entry name" value="Prot_kinase_dom"/>
</dbReference>
<dbReference type="PANTHER" id="PTHR24055">
    <property type="entry name" value="MITOGEN-ACTIVATED PROTEIN KINASE"/>
    <property type="match status" value="1"/>
</dbReference>
<dbReference type="Pfam" id="PF00069">
    <property type="entry name" value="Pkinase"/>
    <property type="match status" value="1"/>
</dbReference>
<dbReference type="SMART" id="SM00220">
    <property type="entry name" value="S_TKc"/>
    <property type="match status" value="1"/>
</dbReference>
<dbReference type="SUPFAM" id="SSF56112">
    <property type="entry name" value="Protein kinase-like (PK-like)"/>
    <property type="match status" value="1"/>
</dbReference>
<dbReference type="PROSITE" id="PS50011">
    <property type="entry name" value="PROTEIN_KINASE_DOM"/>
    <property type="match status" value="1"/>
</dbReference>
<reference key="1">
    <citation type="journal article" date="2005" name="Nature">
        <title>The genome of the social amoeba Dictyostelium discoideum.</title>
        <authorList>
            <person name="Eichinger L."/>
            <person name="Pachebat J.A."/>
            <person name="Gloeckner G."/>
            <person name="Rajandream M.A."/>
            <person name="Sucgang R."/>
            <person name="Berriman M."/>
            <person name="Song J."/>
            <person name="Olsen R."/>
            <person name="Szafranski K."/>
            <person name="Xu Q."/>
            <person name="Tunggal B."/>
            <person name="Kummerfeld S."/>
            <person name="Madera M."/>
            <person name="Konfortov B.A."/>
            <person name="Rivero F."/>
            <person name="Bankier A.T."/>
            <person name="Lehmann R."/>
            <person name="Hamlin N."/>
            <person name="Davies R."/>
            <person name="Gaudet P."/>
            <person name="Fey P."/>
            <person name="Pilcher K."/>
            <person name="Chen G."/>
            <person name="Saunders D."/>
            <person name="Sodergren E.J."/>
            <person name="Davis P."/>
            <person name="Kerhornou A."/>
            <person name="Nie X."/>
            <person name="Hall N."/>
            <person name="Anjard C."/>
            <person name="Hemphill L."/>
            <person name="Bason N."/>
            <person name="Farbrother P."/>
            <person name="Desany B."/>
            <person name="Just E."/>
            <person name="Morio T."/>
            <person name="Rost R."/>
            <person name="Churcher C.M."/>
            <person name="Cooper J."/>
            <person name="Haydock S."/>
            <person name="van Driessche N."/>
            <person name="Cronin A."/>
            <person name="Goodhead I."/>
            <person name="Muzny D.M."/>
            <person name="Mourier T."/>
            <person name="Pain A."/>
            <person name="Lu M."/>
            <person name="Harper D."/>
            <person name="Lindsay R."/>
            <person name="Hauser H."/>
            <person name="James K.D."/>
            <person name="Quiles M."/>
            <person name="Madan Babu M."/>
            <person name="Saito T."/>
            <person name="Buchrieser C."/>
            <person name="Wardroper A."/>
            <person name="Felder M."/>
            <person name="Thangavelu M."/>
            <person name="Johnson D."/>
            <person name="Knights A."/>
            <person name="Loulseged H."/>
            <person name="Mungall K.L."/>
            <person name="Oliver K."/>
            <person name="Price C."/>
            <person name="Quail M.A."/>
            <person name="Urushihara H."/>
            <person name="Hernandez J."/>
            <person name="Rabbinowitsch E."/>
            <person name="Steffen D."/>
            <person name="Sanders M."/>
            <person name="Ma J."/>
            <person name="Kohara Y."/>
            <person name="Sharp S."/>
            <person name="Simmonds M.N."/>
            <person name="Spiegler S."/>
            <person name="Tivey A."/>
            <person name="Sugano S."/>
            <person name="White B."/>
            <person name="Walker D."/>
            <person name="Woodward J.R."/>
            <person name="Winckler T."/>
            <person name="Tanaka Y."/>
            <person name="Shaulsky G."/>
            <person name="Schleicher M."/>
            <person name="Weinstock G.M."/>
            <person name="Rosenthal A."/>
            <person name="Cox E.C."/>
            <person name="Chisholm R.L."/>
            <person name="Gibbs R.A."/>
            <person name="Loomis W.F."/>
            <person name="Platzer M."/>
            <person name="Kay R.R."/>
            <person name="Williams J.G."/>
            <person name="Dear P.H."/>
            <person name="Noegel A.A."/>
            <person name="Barrell B.G."/>
            <person name="Kuspa A."/>
        </authorList>
    </citation>
    <scope>NUCLEOTIDE SEQUENCE [LARGE SCALE GENOMIC DNA]</scope>
    <source>
        <strain>AX4</strain>
    </source>
</reference>
<gene>
    <name type="ORF">DDB_G0280855</name>
</gene>
<keyword id="KW-0067">ATP-binding</keyword>
<keyword id="KW-0547">Nucleotide-binding</keyword>
<keyword id="KW-1185">Reference proteome</keyword>
<name>Y9333_DICDI</name>
<protein>
    <recommendedName>
        <fullName>Probable inactive serine/threonine-protein kinase DDB_G0280855</fullName>
    </recommendedName>
</protein>
<evidence type="ECO:0000255" key="1">
    <source>
        <dbReference type="PROSITE-ProRule" id="PRU00159"/>
    </source>
</evidence>
<evidence type="ECO:0000305" key="2"/>
<organism>
    <name type="scientific">Dictyostelium discoideum</name>
    <name type="common">Social amoeba</name>
    <dbReference type="NCBI Taxonomy" id="44689"/>
    <lineage>
        <taxon>Eukaryota</taxon>
        <taxon>Amoebozoa</taxon>
        <taxon>Evosea</taxon>
        <taxon>Eumycetozoa</taxon>
        <taxon>Dictyostelia</taxon>
        <taxon>Dictyosteliales</taxon>
        <taxon>Dictyosteliaceae</taxon>
        <taxon>Dictyostelium</taxon>
    </lineage>
</organism>